<gene>
    <name type="ordered locus">Pmen_0689</name>
</gene>
<keyword id="KW-0210">Decarboxylase</keyword>
<keyword id="KW-0456">Lyase</keyword>
<keyword id="KW-0460">Magnesium</keyword>
<keyword id="KW-0479">Metal-binding</keyword>
<reference key="1">
    <citation type="submission" date="2007-04" db="EMBL/GenBank/DDBJ databases">
        <title>Complete sequence of Pseudomonas mendocina ymp.</title>
        <authorList>
            <consortium name="US DOE Joint Genome Institute"/>
            <person name="Copeland A."/>
            <person name="Lucas S."/>
            <person name="Lapidus A."/>
            <person name="Barry K."/>
            <person name="Glavina del Rio T."/>
            <person name="Dalin E."/>
            <person name="Tice H."/>
            <person name="Pitluck S."/>
            <person name="Kiss H."/>
            <person name="Brettin T."/>
            <person name="Detter J.C."/>
            <person name="Bruce D."/>
            <person name="Han C."/>
            <person name="Schmutz J."/>
            <person name="Larimer F."/>
            <person name="Land M."/>
            <person name="Hauser L."/>
            <person name="Kyrpides N."/>
            <person name="Mikhailova N."/>
            <person name="Hersman L."/>
            <person name="Dubois J."/>
            <person name="Maurice P."/>
            <person name="Richardson P."/>
        </authorList>
    </citation>
    <scope>NUCLEOTIDE SEQUENCE [LARGE SCALE GENOMIC DNA]</scope>
    <source>
        <strain>ymp</strain>
    </source>
</reference>
<proteinExistence type="inferred from homology"/>
<accession>A4XQ41</accession>
<protein>
    <recommendedName>
        <fullName evidence="1">Oxaloacetate decarboxylase</fullName>
        <ecNumber evidence="1">4.1.1.112</ecNumber>
    </recommendedName>
</protein>
<name>OADC_ECTM1</name>
<comment type="function">
    <text evidence="1">Catalyzes the decarboxylation of oxaloacetate into pyruvate. Seems to play a role in maintaining cellular concentrations of bicarbonate and pyruvate.</text>
</comment>
<comment type="catalytic activity">
    <reaction evidence="1">
        <text>oxaloacetate + H(+) = pyruvate + CO2</text>
        <dbReference type="Rhea" id="RHEA:15641"/>
        <dbReference type="ChEBI" id="CHEBI:15361"/>
        <dbReference type="ChEBI" id="CHEBI:15378"/>
        <dbReference type="ChEBI" id="CHEBI:16452"/>
        <dbReference type="ChEBI" id="CHEBI:16526"/>
        <dbReference type="EC" id="4.1.1.112"/>
    </reaction>
</comment>
<comment type="cofactor">
    <cofactor evidence="1">
        <name>Mg(2+)</name>
        <dbReference type="ChEBI" id="CHEBI:18420"/>
    </cofactor>
    <text evidence="1">Binds 1 Mg(2+) ion per subunit.</text>
</comment>
<comment type="subunit">
    <text evidence="1">Homotetramer; dimer of dimers.</text>
</comment>
<comment type="similarity">
    <text evidence="2">Belongs to the isocitrate lyase/PEP mutase superfamily. Oxaloacetate decarboxylase family.</text>
</comment>
<sequence length="290" mass="31661">MPILQRASHHELRSAFRALLASERCYHTASVFDPMSARIAADLDFEVGILGGSVASLQVLGAPDFALITLSEFVEQAARIGRVARLPVIADADHGYGNALNVMRTVVELERAGVAALTIEDTLLPAQFGRKSTDLISIEEGVGKILAALEARVDPELSIIARTHAGVLEVDEVIRRTRAYEAAGADGICLVGVKDFAHLEQIAAGLKVPLMLVTYGNPELRDNQRLARLGVRIVVNGHAAYFAAIKATYDCLREQRGAQPCDLNATELTHKYTMPEDYILWAKEFMEVRE</sequence>
<evidence type="ECO:0000255" key="1">
    <source>
        <dbReference type="HAMAP-Rule" id="MF_01299"/>
    </source>
</evidence>
<evidence type="ECO:0000305" key="2"/>
<dbReference type="EC" id="4.1.1.112" evidence="1"/>
<dbReference type="EMBL" id="CP000680">
    <property type="protein sequence ID" value="ABP83457.1"/>
    <property type="molecule type" value="Genomic_DNA"/>
</dbReference>
<dbReference type="SMR" id="A4XQ41"/>
<dbReference type="STRING" id="399739.Pmen_0689"/>
<dbReference type="KEGG" id="pmy:Pmen_0689"/>
<dbReference type="PATRIC" id="fig|399739.8.peg.697"/>
<dbReference type="eggNOG" id="COG2513">
    <property type="taxonomic scope" value="Bacteria"/>
</dbReference>
<dbReference type="HOGENOM" id="CLU_027389_3_2_6"/>
<dbReference type="GO" id="GO:0000287">
    <property type="term" value="F:magnesium ion binding"/>
    <property type="evidence" value="ECO:0007669"/>
    <property type="project" value="UniProtKB-UniRule"/>
</dbReference>
<dbReference type="GO" id="GO:0046421">
    <property type="term" value="F:methylisocitrate lyase activity"/>
    <property type="evidence" value="ECO:0007669"/>
    <property type="project" value="TreeGrafter"/>
</dbReference>
<dbReference type="GO" id="GO:0008948">
    <property type="term" value="F:oxaloacetate decarboxylase activity"/>
    <property type="evidence" value="ECO:0007669"/>
    <property type="project" value="UniProtKB-UniRule"/>
</dbReference>
<dbReference type="GO" id="GO:0006107">
    <property type="term" value="P:oxaloacetate metabolic process"/>
    <property type="evidence" value="ECO:0007669"/>
    <property type="project" value="UniProtKB-UniRule"/>
</dbReference>
<dbReference type="GO" id="GO:0019629">
    <property type="term" value="P:propionate catabolic process, 2-methylcitrate cycle"/>
    <property type="evidence" value="ECO:0007669"/>
    <property type="project" value="TreeGrafter"/>
</dbReference>
<dbReference type="GO" id="GO:0042866">
    <property type="term" value="P:pyruvate biosynthetic process"/>
    <property type="evidence" value="ECO:0007669"/>
    <property type="project" value="UniProtKB-UniRule"/>
</dbReference>
<dbReference type="CDD" id="cd00377">
    <property type="entry name" value="ICL_PEPM"/>
    <property type="match status" value="1"/>
</dbReference>
<dbReference type="Gene3D" id="3.20.20.60">
    <property type="entry name" value="Phosphoenolpyruvate-binding domains"/>
    <property type="match status" value="1"/>
</dbReference>
<dbReference type="HAMAP" id="MF_01299">
    <property type="entry name" value="OadC"/>
    <property type="match status" value="1"/>
</dbReference>
<dbReference type="InterPro" id="IPR039556">
    <property type="entry name" value="ICL/PEPM"/>
</dbReference>
<dbReference type="InterPro" id="IPR023687">
    <property type="entry name" value="Oxaloacetate_deCOase_bac"/>
</dbReference>
<dbReference type="InterPro" id="IPR015813">
    <property type="entry name" value="Pyrv/PenolPyrv_kinase-like_dom"/>
</dbReference>
<dbReference type="InterPro" id="IPR040442">
    <property type="entry name" value="Pyrv_kinase-like_dom_sf"/>
</dbReference>
<dbReference type="PANTHER" id="PTHR42905:SF3">
    <property type="entry name" value="OXALOACETATE DECARBOXYLASE"/>
    <property type="match status" value="1"/>
</dbReference>
<dbReference type="PANTHER" id="PTHR42905">
    <property type="entry name" value="PHOSPHOENOLPYRUVATE CARBOXYLASE"/>
    <property type="match status" value="1"/>
</dbReference>
<dbReference type="Pfam" id="PF13714">
    <property type="entry name" value="PEP_mutase"/>
    <property type="match status" value="1"/>
</dbReference>
<dbReference type="SUPFAM" id="SSF51621">
    <property type="entry name" value="Phosphoenolpyruvate/pyruvate domain"/>
    <property type="match status" value="1"/>
</dbReference>
<organism>
    <name type="scientific">Ectopseudomonas mendocina (strain ymp)</name>
    <name type="common">Pseudomonas mendocina</name>
    <dbReference type="NCBI Taxonomy" id="399739"/>
    <lineage>
        <taxon>Bacteria</taxon>
        <taxon>Pseudomonadati</taxon>
        <taxon>Pseudomonadota</taxon>
        <taxon>Gammaproteobacteria</taxon>
        <taxon>Pseudomonadales</taxon>
        <taxon>Pseudomonadaceae</taxon>
        <taxon>Ectopseudomonas</taxon>
    </lineage>
</organism>
<feature type="chain" id="PRO_0000364065" description="Oxaloacetate decarboxylase">
    <location>
        <begin position="1"/>
        <end position="290"/>
    </location>
</feature>
<feature type="binding site" evidence="1">
    <location>
        <position position="53"/>
    </location>
    <ligand>
        <name>substrate</name>
    </ligand>
</feature>
<feature type="binding site" evidence="1">
    <location>
        <position position="91"/>
    </location>
    <ligand>
        <name>Mg(2+)</name>
        <dbReference type="ChEBI" id="CHEBI:18420"/>
    </ligand>
</feature>
<feature type="binding site" evidence="1">
    <location>
        <position position="162"/>
    </location>
    <ligand>
        <name>substrate</name>
    </ligand>
</feature>
<feature type="binding site" evidence="1">
    <location>
        <position position="238"/>
    </location>
    <ligand>
        <name>substrate</name>
    </ligand>
</feature>